<sequence>MAKKEVSASKPGNTKKDNVLLKKRKQQAVEKEEAEKEKEEGVSEDEFNVQGLIDPESDSDDEGAAAAEEEEEEEEQQQDVKELDLDKGEVISSDSDAEDFDSEEELNKLLGEEDDPSDYSSVGFSDEPKEDGDEQDEQDAFAAADAATDDDAFGDVKLKNLSITDPSKLEVRTKFSDGTPRIIKPEIEPVYDSDDSDAENFNTIGNIPISAYEEMPHIGYDINGKRIMRPAKGSALDQLLESIDLPQGWTGLLDQNTGAPLKITDEELELIRKIQQQENTDENINPYEPLNDWFTKNQEVMPLTAVPEPKRRFVPSKHEAKRVMKIVKAIREGRILTPEKAKELKEKETEEMNYDLWQNESEVPDHIMNLRAPKLPPPTNEESYNPPEEYLLNEEEKQKWLEQDPVDRERNFIPQKYSSLRLVPGYQDSVRERFERSLDLYLAPRLRKNKLNIDPESLIPELPSPKDLRPFPIKCSTVYEGHTGKIRTLSIDPQGLWLATGSDDGSVRIWEVLTGRQVFKAQLVNKEHNGEDHIESLEWNPNAQTGILAVCAGENIYLLVPPIFGFEIENTGKLRIESGWGYDTFGNTKQDLKVKGEDTKGDLDDDEEEEEEEEDDDDDEGQGKVKAHNSTAPAKKDVAKWINPNSSQQAMGISAIIQCRRTVKKISWHRKGDYFVTVSPDSKNTAVLIHQLSKHLSQSPFRKSKGVIMDAKFHPFKPQLFVASQRQIKIYDLAQQTLLKKLLPGVRLLSTIDLHPRGDNLLAASYDKRVLWHDLDLAATPYKTLRYHEKAVRQIKYHKGSLPLFASASDDGIIHVFHGTVYDDLMTNPLLVPLKKLSGHKVINQIGVLDIVWHPKEAWLFSAGADGTARLWTT</sequence>
<organism>
    <name type="scientific">Lodderomyces elongisporus (strain ATCC 11503 / CBS 2605 / JCM 1781 / NBRC 1676 / NRRL YB-4239)</name>
    <name type="common">Yeast</name>
    <name type="synonym">Saccharomyces elongisporus</name>
    <dbReference type="NCBI Taxonomy" id="379508"/>
    <lineage>
        <taxon>Eukaryota</taxon>
        <taxon>Fungi</taxon>
        <taxon>Dikarya</taxon>
        <taxon>Ascomycota</taxon>
        <taxon>Saccharomycotina</taxon>
        <taxon>Pichiomycetes</taxon>
        <taxon>Debaryomycetaceae</taxon>
        <taxon>Candida/Lodderomyces clade</taxon>
        <taxon>Lodderomyces</taxon>
    </lineage>
</organism>
<protein>
    <recommendedName>
        <fullName evidence="2">Ribosome biogenesis protein ERB1</fullName>
    </recommendedName>
    <alternativeName>
        <fullName evidence="2">Eukaryotic ribosome biogenesis protein 1</fullName>
    </alternativeName>
</protein>
<keyword id="KW-0539">Nucleus</keyword>
<keyword id="KW-1185">Reference proteome</keyword>
<keyword id="KW-0677">Repeat</keyword>
<keyword id="KW-0690">Ribosome biogenesis</keyword>
<keyword id="KW-0698">rRNA processing</keyword>
<keyword id="KW-0853">WD repeat</keyword>
<reference key="1">
    <citation type="journal article" date="2009" name="Nature">
        <title>Evolution of pathogenicity and sexual reproduction in eight Candida genomes.</title>
        <authorList>
            <person name="Butler G."/>
            <person name="Rasmussen M.D."/>
            <person name="Lin M.F."/>
            <person name="Santos M.A.S."/>
            <person name="Sakthikumar S."/>
            <person name="Munro C.A."/>
            <person name="Rheinbay E."/>
            <person name="Grabherr M."/>
            <person name="Forche A."/>
            <person name="Reedy J.L."/>
            <person name="Agrafioti I."/>
            <person name="Arnaud M.B."/>
            <person name="Bates S."/>
            <person name="Brown A.J.P."/>
            <person name="Brunke S."/>
            <person name="Costanzo M.C."/>
            <person name="Fitzpatrick D.A."/>
            <person name="de Groot P.W.J."/>
            <person name="Harris D."/>
            <person name="Hoyer L.L."/>
            <person name="Hube B."/>
            <person name="Klis F.M."/>
            <person name="Kodira C."/>
            <person name="Lennard N."/>
            <person name="Logue M.E."/>
            <person name="Martin R."/>
            <person name="Neiman A.M."/>
            <person name="Nikolaou E."/>
            <person name="Quail M.A."/>
            <person name="Quinn J."/>
            <person name="Santos M.C."/>
            <person name="Schmitzberger F.F."/>
            <person name="Sherlock G."/>
            <person name="Shah P."/>
            <person name="Silverstein K.A.T."/>
            <person name="Skrzypek M.S."/>
            <person name="Soll D."/>
            <person name="Staggs R."/>
            <person name="Stansfield I."/>
            <person name="Stumpf M.P.H."/>
            <person name="Sudbery P.E."/>
            <person name="Srikantha T."/>
            <person name="Zeng Q."/>
            <person name="Berman J."/>
            <person name="Berriman M."/>
            <person name="Heitman J."/>
            <person name="Gow N.A.R."/>
            <person name="Lorenz M.C."/>
            <person name="Birren B.W."/>
            <person name="Kellis M."/>
            <person name="Cuomo C.A."/>
        </authorList>
    </citation>
    <scope>NUCLEOTIDE SEQUENCE [LARGE SCALE GENOMIC DNA]</scope>
    <source>
        <strain>ATCC 11503 / BCRC 21390 / CBS 2605 / JCM 1781 / NBRC 1676 / NRRL YB-4239</strain>
    </source>
</reference>
<comment type="function">
    <text evidence="2">Component of the NOP7 complex, which is required for maturation of the 25S and 5.8S ribosomal RNAs and formation of the 60S ribosome.</text>
</comment>
<comment type="subunit">
    <text evidence="2">Component of the NOP7 complex, composed of ERB1, NOP7 and YTM1. The complex is held together by ERB1, which interacts with NOP7 via its N-terminal domain and with YTM1 via a high-affinity interaction between the seven-bladed beta-propeller domains of the 2 proteins. The NOP7 complex associates with the 66S pre-ribosome.</text>
</comment>
<comment type="subcellular location">
    <subcellularLocation>
        <location evidence="2">Nucleus</location>
        <location evidence="2">Nucleolus</location>
    </subcellularLocation>
    <subcellularLocation>
        <location evidence="2">Nucleus</location>
        <location evidence="2">Nucleoplasm</location>
    </subcellularLocation>
</comment>
<comment type="similarity">
    <text evidence="2">Belongs to the WD repeat BOP1/ERB1 family.</text>
</comment>
<evidence type="ECO:0000250" key="1"/>
<evidence type="ECO:0000255" key="2">
    <source>
        <dbReference type="HAMAP-Rule" id="MF_03027"/>
    </source>
</evidence>
<evidence type="ECO:0000256" key="3">
    <source>
        <dbReference type="SAM" id="MobiDB-lite"/>
    </source>
</evidence>
<feature type="chain" id="PRO_0000370432" description="Ribosome biogenesis protein ERB1">
    <location>
        <begin position="1"/>
        <end position="874"/>
    </location>
</feature>
<feature type="repeat" description="WD 1">
    <location>
        <begin position="481"/>
        <end position="520"/>
    </location>
</feature>
<feature type="repeat" description="WD 2">
    <location>
        <begin position="529"/>
        <end position="569"/>
    </location>
</feature>
<feature type="repeat" description="WD 3">
    <location>
        <begin position="658"/>
        <end position="700"/>
    </location>
</feature>
<feature type="repeat" description="WD 4">
    <location>
        <begin position="703"/>
        <end position="741"/>
    </location>
</feature>
<feature type="repeat" description="WD 5">
    <location>
        <begin position="744"/>
        <end position="783"/>
    </location>
</feature>
<feature type="repeat" description="WD 6">
    <location>
        <begin position="787"/>
        <end position="827"/>
    </location>
</feature>
<feature type="repeat" description="WD 7">
    <location>
        <begin position="843"/>
        <end position="874"/>
    </location>
</feature>
<feature type="region of interest" description="Disordered" evidence="3">
    <location>
        <begin position="1"/>
        <end position="148"/>
    </location>
</feature>
<feature type="region of interest" description="Required for interaction with NOP7" evidence="1">
    <location>
        <begin position="312"/>
        <end position="429"/>
    </location>
</feature>
<feature type="region of interest" description="Required for interaction with YTM1" evidence="1">
    <location>
        <begin position="429"/>
        <end position="465"/>
    </location>
</feature>
<feature type="region of interest" description="Disordered" evidence="3">
    <location>
        <begin position="593"/>
        <end position="640"/>
    </location>
</feature>
<feature type="compositionally biased region" description="Basic and acidic residues" evidence="3">
    <location>
        <begin position="27"/>
        <end position="41"/>
    </location>
</feature>
<feature type="compositionally biased region" description="Acidic residues" evidence="3">
    <location>
        <begin position="55"/>
        <end position="77"/>
    </location>
</feature>
<feature type="compositionally biased region" description="Basic and acidic residues" evidence="3">
    <location>
        <begin position="78"/>
        <end position="89"/>
    </location>
</feature>
<feature type="compositionally biased region" description="Acidic residues" evidence="3">
    <location>
        <begin position="95"/>
        <end position="104"/>
    </location>
</feature>
<feature type="compositionally biased region" description="Acidic residues" evidence="3">
    <location>
        <begin position="128"/>
        <end position="139"/>
    </location>
</feature>
<feature type="compositionally biased region" description="Basic and acidic residues" evidence="3">
    <location>
        <begin position="593"/>
        <end position="602"/>
    </location>
</feature>
<feature type="compositionally biased region" description="Acidic residues" evidence="3">
    <location>
        <begin position="603"/>
        <end position="620"/>
    </location>
</feature>
<accession>A5DWF4</accession>
<dbReference type="EMBL" id="CH981525">
    <property type="protein sequence ID" value="EDK43512.1"/>
    <property type="molecule type" value="Genomic_DNA"/>
</dbReference>
<dbReference type="RefSeq" id="XP_001526862.1">
    <property type="nucleotide sequence ID" value="XM_001526812.1"/>
</dbReference>
<dbReference type="SMR" id="A5DWF4"/>
<dbReference type="FunCoup" id="A5DWF4">
    <property type="interactions" value="1022"/>
</dbReference>
<dbReference type="STRING" id="379508.A5DWF4"/>
<dbReference type="GeneID" id="5233972"/>
<dbReference type="KEGG" id="lel:PVL30_001663"/>
<dbReference type="VEuPathDB" id="FungiDB:LELG_01690"/>
<dbReference type="eggNOG" id="KOG0650">
    <property type="taxonomic scope" value="Eukaryota"/>
</dbReference>
<dbReference type="HOGENOM" id="CLU_011390_0_1_1"/>
<dbReference type="InParanoid" id="A5DWF4"/>
<dbReference type="OMA" id="MRPAKGE"/>
<dbReference type="OrthoDB" id="5571054at2759"/>
<dbReference type="Proteomes" id="UP000001996">
    <property type="component" value="Unassembled WGS sequence"/>
</dbReference>
<dbReference type="GO" id="GO:0005654">
    <property type="term" value="C:nucleoplasm"/>
    <property type="evidence" value="ECO:0007669"/>
    <property type="project" value="UniProtKB-SubCell"/>
</dbReference>
<dbReference type="GO" id="GO:0070545">
    <property type="term" value="C:PeBoW complex"/>
    <property type="evidence" value="ECO:0007669"/>
    <property type="project" value="EnsemblFungi"/>
</dbReference>
<dbReference type="GO" id="GO:0030687">
    <property type="term" value="C:preribosome, large subunit precursor"/>
    <property type="evidence" value="ECO:0007669"/>
    <property type="project" value="UniProtKB-UniRule"/>
</dbReference>
<dbReference type="GO" id="GO:0070180">
    <property type="term" value="F:large ribosomal subunit rRNA binding"/>
    <property type="evidence" value="ECO:0007669"/>
    <property type="project" value="EnsemblFungi"/>
</dbReference>
<dbReference type="GO" id="GO:0043021">
    <property type="term" value="F:ribonucleoprotein complex binding"/>
    <property type="evidence" value="ECO:0007669"/>
    <property type="project" value="UniProtKB-UniRule"/>
</dbReference>
<dbReference type="GO" id="GO:0000466">
    <property type="term" value="P:maturation of 5.8S rRNA from tricistronic rRNA transcript (SSU-rRNA, 5.8S rRNA, LSU-rRNA)"/>
    <property type="evidence" value="ECO:0007669"/>
    <property type="project" value="UniProtKB-UniRule"/>
</dbReference>
<dbReference type="GO" id="GO:0000463">
    <property type="term" value="P:maturation of LSU-rRNA from tricistronic rRNA transcript (SSU-rRNA, 5.8S rRNA, LSU-rRNA)"/>
    <property type="evidence" value="ECO:0007669"/>
    <property type="project" value="UniProtKB-UniRule"/>
</dbReference>
<dbReference type="Gene3D" id="2.130.10.10">
    <property type="entry name" value="YVTN repeat-like/Quinoprotein amine dehydrogenase"/>
    <property type="match status" value="1"/>
</dbReference>
<dbReference type="HAMAP" id="MF_03027">
    <property type="entry name" value="BOP1"/>
    <property type="match status" value="1"/>
</dbReference>
<dbReference type="InterPro" id="IPR028598">
    <property type="entry name" value="BOP1/Erb1"/>
</dbReference>
<dbReference type="InterPro" id="IPR012953">
    <property type="entry name" value="BOP1_N_dom"/>
</dbReference>
<dbReference type="InterPro" id="IPR015943">
    <property type="entry name" value="WD40/YVTN_repeat-like_dom_sf"/>
</dbReference>
<dbReference type="InterPro" id="IPR019775">
    <property type="entry name" value="WD40_repeat_CS"/>
</dbReference>
<dbReference type="InterPro" id="IPR036322">
    <property type="entry name" value="WD40_repeat_dom_sf"/>
</dbReference>
<dbReference type="InterPro" id="IPR001680">
    <property type="entry name" value="WD40_rpt"/>
</dbReference>
<dbReference type="PANTHER" id="PTHR17605:SF0">
    <property type="entry name" value="RIBOSOME BIOGENESIS PROTEIN BOP1"/>
    <property type="match status" value="1"/>
</dbReference>
<dbReference type="PANTHER" id="PTHR17605">
    <property type="entry name" value="RIBOSOME BIOGENESIS PROTEIN BOP1 BLOCK OF PROLIFERATION 1 PROTEIN"/>
    <property type="match status" value="1"/>
</dbReference>
<dbReference type="Pfam" id="PF08145">
    <property type="entry name" value="BOP1NT"/>
    <property type="match status" value="1"/>
</dbReference>
<dbReference type="Pfam" id="PF00400">
    <property type="entry name" value="WD40"/>
    <property type="match status" value="2"/>
</dbReference>
<dbReference type="SMART" id="SM01035">
    <property type="entry name" value="BOP1NT"/>
    <property type="match status" value="1"/>
</dbReference>
<dbReference type="SMART" id="SM00320">
    <property type="entry name" value="WD40"/>
    <property type="match status" value="6"/>
</dbReference>
<dbReference type="SUPFAM" id="SSF50978">
    <property type="entry name" value="WD40 repeat-like"/>
    <property type="match status" value="1"/>
</dbReference>
<dbReference type="PROSITE" id="PS00678">
    <property type="entry name" value="WD_REPEATS_1"/>
    <property type="match status" value="1"/>
</dbReference>
<dbReference type="PROSITE" id="PS50082">
    <property type="entry name" value="WD_REPEATS_2"/>
    <property type="match status" value="2"/>
</dbReference>
<dbReference type="PROSITE" id="PS50294">
    <property type="entry name" value="WD_REPEATS_REGION"/>
    <property type="match status" value="2"/>
</dbReference>
<name>ERB1_LODEL</name>
<gene>
    <name evidence="2" type="primary">ERB1</name>
    <name type="ORF">LELG_01690</name>
</gene>
<proteinExistence type="inferred from homology"/>